<protein>
    <recommendedName>
        <fullName>Putative defensin-like protein 33</fullName>
    </recommendedName>
</protein>
<feature type="signal peptide" evidence="2">
    <location>
        <begin position="1"/>
        <end position="25"/>
    </location>
</feature>
<feature type="chain" id="PRO_0000379615" description="Putative defensin-like protein 33">
    <location>
        <begin position="26"/>
        <end position="73"/>
    </location>
</feature>
<feature type="disulfide bond" evidence="1">
    <location>
        <begin position="33"/>
        <end position="59"/>
    </location>
</feature>
<feature type="disulfide bond" evidence="1">
    <location>
        <begin position="45"/>
        <end position="68"/>
    </location>
</feature>
<feature type="disulfide bond" evidence="1">
    <location>
        <begin position="49"/>
        <end position="70"/>
    </location>
</feature>
<accession>Q2V4D6</accession>
<name>DEF33_ARATH</name>
<proteinExistence type="inferred from homology"/>
<sequence length="73" mass="8149">MASNKVSFIFILFLCVLSTAEFGEAQNPRGRKCEDPNGVDQKAKCYIYCNEQGFLGGSCQGYTNHYMCECYVG</sequence>
<reference key="1">
    <citation type="journal article" date="2000" name="Nature">
        <title>Sequence and analysis of chromosome 1 of the plant Arabidopsis thaliana.</title>
        <authorList>
            <person name="Theologis A."/>
            <person name="Ecker J.R."/>
            <person name="Palm C.J."/>
            <person name="Federspiel N.A."/>
            <person name="Kaul S."/>
            <person name="White O."/>
            <person name="Alonso J."/>
            <person name="Altafi H."/>
            <person name="Araujo R."/>
            <person name="Bowman C.L."/>
            <person name="Brooks S.Y."/>
            <person name="Buehler E."/>
            <person name="Chan A."/>
            <person name="Chao Q."/>
            <person name="Chen H."/>
            <person name="Cheuk R.F."/>
            <person name="Chin C.W."/>
            <person name="Chung M.K."/>
            <person name="Conn L."/>
            <person name="Conway A.B."/>
            <person name="Conway A.R."/>
            <person name="Creasy T.H."/>
            <person name="Dewar K."/>
            <person name="Dunn P."/>
            <person name="Etgu P."/>
            <person name="Feldblyum T.V."/>
            <person name="Feng J.-D."/>
            <person name="Fong B."/>
            <person name="Fujii C.Y."/>
            <person name="Gill J.E."/>
            <person name="Goldsmith A.D."/>
            <person name="Haas B."/>
            <person name="Hansen N.F."/>
            <person name="Hughes B."/>
            <person name="Huizar L."/>
            <person name="Hunter J.L."/>
            <person name="Jenkins J."/>
            <person name="Johnson-Hopson C."/>
            <person name="Khan S."/>
            <person name="Khaykin E."/>
            <person name="Kim C.J."/>
            <person name="Koo H.L."/>
            <person name="Kremenetskaia I."/>
            <person name="Kurtz D.B."/>
            <person name="Kwan A."/>
            <person name="Lam B."/>
            <person name="Langin-Hooper S."/>
            <person name="Lee A."/>
            <person name="Lee J.M."/>
            <person name="Lenz C.A."/>
            <person name="Li J.H."/>
            <person name="Li Y.-P."/>
            <person name="Lin X."/>
            <person name="Liu S.X."/>
            <person name="Liu Z.A."/>
            <person name="Luros J.S."/>
            <person name="Maiti R."/>
            <person name="Marziali A."/>
            <person name="Militscher J."/>
            <person name="Miranda M."/>
            <person name="Nguyen M."/>
            <person name="Nierman W.C."/>
            <person name="Osborne B.I."/>
            <person name="Pai G."/>
            <person name="Peterson J."/>
            <person name="Pham P.K."/>
            <person name="Rizzo M."/>
            <person name="Rooney T."/>
            <person name="Rowley D."/>
            <person name="Sakano H."/>
            <person name="Salzberg S.L."/>
            <person name="Schwartz J.R."/>
            <person name="Shinn P."/>
            <person name="Southwick A.M."/>
            <person name="Sun H."/>
            <person name="Tallon L.J."/>
            <person name="Tambunga G."/>
            <person name="Toriumi M.J."/>
            <person name="Town C.D."/>
            <person name="Utterback T."/>
            <person name="Van Aken S."/>
            <person name="Vaysberg M."/>
            <person name="Vysotskaia V.S."/>
            <person name="Walker M."/>
            <person name="Wu D."/>
            <person name="Yu G."/>
            <person name="Fraser C.M."/>
            <person name="Venter J.C."/>
            <person name="Davis R.W."/>
        </authorList>
    </citation>
    <scope>NUCLEOTIDE SEQUENCE [LARGE SCALE GENOMIC DNA]</scope>
    <source>
        <strain>cv. Columbia</strain>
    </source>
</reference>
<reference key="2">
    <citation type="journal article" date="2017" name="Plant J.">
        <title>Araport11: a complete reannotation of the Arabidopsis thaliana reference genome.</title>
        <authorList>
            <person name="Cheng C.Y."/>
            <person name="Krishnakumar V."/>
            <person name="Chan A.P."/>
            <person name="Thibaud-Nissen F."/>
            <person name="Schobel S."/>
            <person name="Town C.D."/>
        </authorList>
    </citation>
    <scope>GENOME REANNOTATION</scope>
    <source>
        <strain>cv. Columbia</strain>
    </source>
</reference>
<reference key="3">
    <citation type="journal article" date="2005" name="Plant Physiol.">
        <title>Genome organization of more than 300 defensin-like genes in Arabidopsis.</title>
        <authorList>
            <person name="Silverstein K.A.T."/>
            <person name="Graham M.A."/>
            <person name="Paape T.D."/>
            <person name="VandenBosch K.A."/>
        </authorList>
    </citation>
    <scope>GENE FAMILY</scope>
</reference>
<keyword id="KW-0929">Antimicrobial</keyword>
<keyword id="KW-1015">Disulfide bond</keyword>
<keyword id="KW-0295">Fungicide</keyword>
<keyword id="KW-0611">Plant defense</keyword>
<keyword id="KW-1185">Reference proteome</keyword>
<keyword id="KW-0964">Secreted</keyword>
<keyword id="KW-0732">Signal</keyword>
<dbReference type="EMBL" id="AC010675">
    <property type="status" value="NOT_ANNOTATED_CDS"/>
    <property type="molecule type" value="Genomic_DNA"/>
</dbReference>
<dbReference type="EMBL" id="CP002684">
    <property type="protein sequence ID" value="AEE34981.1"/>
    <property type="molecule type" value="Genomic_DNA"/>
</dbReference>
<dbReference type="RefSeq" id="NP_001031258.1">
    <property type="nucleotide sequence ID" value="NM_001036181.1"/>
</dbReference>
<dbReference type="SMR" id="Q2V4D6"/>
<dbReference type="PaxDb" id="3702-AT1G69825.1"/>
<dbReference type="EnsemblPlants" id="AT1G69825.1">
    <property type="protein sequence ID" value="AT1G69825.1"/>
    <property type="gene ID" value="AT1G69825"/>
</dbReference>
<dbReference type="GeneID" id="3767680"/>
<dbReference type="Gramene" id="AT1G69825.1">
    <property type="protein sequence ID" value="AT1G69825.1"/>
    <property type="gene ID" value="AT1G69825"/>
</dbReference>
<dbReference type="KEGG" id="ath:AT1G69825"/>
<dbReference type="Araport" id="AT1G69825"/>
<dbReference type="TAIR" id="AT1G69825"/>
<dbReference type="HOGENOM" id="CLU_2725643_0_0_1"/>
<dbReference type="InParanoid" id="Q2V4D6"/>
<dbReference type="OMA" id="GRKCEDP"/>
<dbReference type="PhylomeDB" id="Q2V4D6"/>
<dbReference type="PRO" id="PR:Q2V4D6"/>
<dbReference type="Proteomes" id="UP000006548">
    <property type="component" value="Chromosome 1"/>
</dbReference>
<dbReference type="ExpressionAtlas" id="Q2V4D6">
    <property type="expression patterns" value="baseline"/>
</dbReference>
<dbReference type="GO" id="GO:0005576">
    <property type="term" value="C:extracellular region"/>
    <property type="evidence" value="ECO:0007669"/>
    <property type="project" value="UniProtKB-SubCell"/>
</dbReference>
<dbReference type="GO" id="GO:0050832">
    <property type="term" value="P:defense response to fungus"/>
    <property type="evidence" value="ECO:0007669"/>
    <property type="project" value="UniProtKB-KW"/>
</dbReference>
<dbReference type="GO" id="GO:0031640">
    <property type="term" value="P:killing of cells of another organism"/>
    <property type="evidence" value="ECO:0007669"/>
    <property type="project" value="UniProtKB-KW"/>
</dbReference>
<evidence type="ECO:0000250" key="1"/>
<evidence type="ECO:0000255" key="2"/>
<evidence type="ECO:0000305" key="3"/>
<organism>
    <name type="scientific">Arabidopsis thaliana</name>
    <name type="common">Mouse-ear cress</name>
    <dbReference type="NCBI Taxonomy" id="3702"/>
    <lineage>
        <taxon>Eukaryota</taxon>
        <taxon>Viridiplantae</taxon>
        <taxon>Streptophyta</taxon>
        <taxon>Embryophyta</taxon>
        <taxon>Tracheophyta</taxon>
        <taxon>Spermatophyta</taxon>
        <taxon>Magnoliopsida</taxon>
        <taxon>eudicotyledons</taxon>
        <taxon>Gunneridae</taxon>
        <taxon>Pentapetalae</taxon>
        <taxon>rosids</taxon>
        <taxon>malvids</taxon>
        <taxon>Brassicales</taxon>
        <taxon>Brassicaceae</taxon>
        <taxon>Camelineae</taxon>
        <taxon>Arabidopsis</taxon>
    </lineage>
</organism>
<gene>
    <name type="ordered locus">At1g69825</name>
    <name type="ORF">T17F3</name>
</gene>
<comment type="subcellular location">
    <subcellularLocation>
        <location evidence="1">Secreted</location>
    </subcellularLocation>
</comment>
<comment type="similarity">
    <text evidence="3">Belongs to the DEFL family.</text>
</comment>
<comment type="caution">
    <text evidence="3">Lacks 1 of the 4 disulfide bonds, which are conserved features of the family.</text>
</comment>